<name>YCX4_GUITH</name>
<keyword id="KW-0150">Chloroplast</keyword>
<keyword id="KW-0934">Plastid</keyword>
<proteinExistence type="predicted"/>
<dbReference type="EMBL" id="AF041468">
    <property type="protein sequence ID" value="AAC35643.1"/>
    <property type="molecule type" value="Genomic_DNA"/>
</dbReference>
<dbReference type="RefSeq" id="NP_050709.1">
    <property type="nucleotide sequence ID" value="NC_000926.1"/>
</dbReference>
<dbReference type="GeneID" id="1444460"/>
<dbReference type="HOGENOM" id="CLU_3072752_0_0_1"/>
<dbReference type="GO" id="GO:0009507">
    <property type="term" value="C:chloroplast"/>
    <property type="evidence" value="ECO:0007669"/>
    <property type="project" value="UniProtKB-SubCell"/>
</dbReference>
<feature type="chain" id="PRO_0000217445" description="Uncharacterized 6.1 kDa protein">
    <location>
        <begin position="1"/>
        <end position="53"/>
    </location>
</feature>
<sequence>MLYYVGADLDSTYKFACFIMKQVKFNDLVKNIKVQINASNIVSFSSKRLVSFA</sequence>
<organism>
    <name type="scientific">Guillardia theta</name>
    <name type="common">Cryptophyte</name>
    <name type="synonym">Cryptomonas phi</name>
    <dbReference type="NCBI Taxonomy" id="55529"/>
    <lineage>
        <taxon>Eukaryota</taxon>
        <taxon>Cryptophyceae</taxon>
        <taxon>Pyrenomonadales</taxon>
        <taxon>Geminigeraceae</taxon>
        <taxon>Guillardia</taxon>
    </lineage>
</organism>
<reference key="1">
    <citation type="journal article" date="1999" name="J. Mol. Evol.">
        <title>The plastid genome of the cryptophyte alga, Guillardia theta: complete sequence and conserved synteny groups confirm its common ancestry with red algae.</title>
        <authorList>
            <person name="Douglas S.E."/>
            <person name="Penny S.L."/>
        </authorList>
    </citation>
    <scope>NUCLEOTIDE SEQUENCE [LARGE SCALE GENOMIC DNA]</scope>
</reference>
<comment type="subcellular location">
    <subcellularLocation>
        <location>Plastid</location>
        <location>Chloroplast</location>
    </subcellularLocation>
</comment>
<protein>
    <recommendedName>
        <fullName>Uncharacterized 6.1 kDa protein</fullName>
    </recommendedName>
    <alternativeName>
        <fullName>ORF53</fullName>
    </alternativeName>
</protein>
<geneLocation type="chloroplast"/>
<accession>O78452</accession>